<keyword id="KW-0328">Glycosyltransferase</keyword>
<keyword id="KW-0460">Magnesium</keyword>
<keyword id="KW-0665">Pyrimidine biosynthesis</keyword>
<keyword id="KW-1185">Reference proteome</keyword>
<keyword id="KW-0808">Transferase</keyword>
<comment type="function">
    <text evidence="1">Catalyzes the transfer of a ribosyl phosphate group from 5-phosphoribose 1-diphosphate to orotate, leading to the formation of orotidine monophosphate (OMP).</text>
</comment>
<comment type="catalytic activity">
    <reaction evidence="1">
        <text>orotidine 5'-phosphate + diphosphate = orotate + 5-phospho-alpha-D-ribose 1-diphosphate</text>
        <dbReference type="Rhea" id="RHEA:10380"/>
        <dbReference type="ChEBI" id="CHEBI:30839"/>
        <dbReference type="ChEBI" id="CHEBI:33019"/>
        <dbReference type="ChEBI" id="CHEBI:57538"/>
        <dbReference type="ChEBI" id="CHEBI:58017"/>
        <dbReference type="EC" id="2.4.2.10"/>
    </reaction>
</comment>
<comment type="cofactor">
    <cofactor evidence="1">
        <name>Mg(2+)</name>
        <dbReference type="ChEBI" id="CHEBI:18420"/>
    </cofactor>
</comment>
<comment type="pathway">
    <text evidence="1">Pyrimidine metabolism; UMP biosynthesis via de novo pathway; UMP from orotate: step 1/2.</text>
</comment>
<comment type="subunit">
    <text evidence="1">Homodimer.</text>
</comment>
<comment type="similarity">
    <text evidence="1">Belongs to the purine/pyrimidine phosphoribosyltransferase family. PyrE subfamily.</text>
</comment>
<accession>Q9HM15</accession>
<dbReference type="EC" id="2.4.2.10" evidence="1"/>
<dbReference type="EMBL" id="AL445063">
    <property type="protein sequence ID" value="CAC11204.1"/>
    <property type="molecule type" value="Genomic_DNA"/>
</dbReference>
<dbReference type="RefSeq" id="WP_010900484.1">
    <property type="nucleotide sequence ID" value="NC_002578.1"/>
</dbReference>
<dbReference type="SMR" id="Q9HM15"/>
<dbReference type="FunCoup" id="Q9HM15">
    <property type="interactions" value="100"/>
</dbReference>
<dbReference type="STRING" id="273075.gene:9571271"/>
<dbReference type="PaxDb" id="273075-Ta0056"/>
<dbReference type="EnsemblBacteria" id="CAC11204">
    <property type="protein sequence ID" value="CAC11204"/>
    <property type="gene ID" value="CAC11204"/>
</dbReference>
<dbReference type="KEGG" id="tac:Ta0056"/>
<dbReference type="eggNOG" id="arCOG00029">
    <property type="taxonomic scope" value="Archaea"/>
</dbReference>
<dbReference type="HOGENOM" id="CLU_074878_2_0_2"/>
<dbReference type="InParanoid" id="Q9HM15"/>
<dbReference type="OrthoDB" id="9089at2157"/>
<dbReference type="UniPathway" id="UPA00070">
    <property type="reaction ID" value="UER00119"/>
</dbReference>
<dbReference type="Proteomes" id="UP000001024">
    <property type="component" value="Chromosome"/>
</dbReference>
<dbReference type="GO" id="GO:0000287">
    <property type="term" value="F:magnesium ion binding"/>
    <property type="evidence" value="ECO:0007669"/>
    <property type="project" value="UniProtKB-UniRule"/>
</dbReference>
<dbReference type="GO" id="GO:0004588">
    <property type="term" value="F:orotate phosphoribosyltransferase activity"/>
    <property type="evidence" value="ECO:0007669"/>
    <property type="project" value="UniProtKB-UniRule"/>
</dbReference>
<dbReference type="GO" id="GO:0044205">
    <property type="term" value="P:'de novo' UMP biosynthetic process"/>
    <property type="evidence" value="ECO:0007669"/>
    <property type="project" value="UniProtKB-UniRule"/>
</dbReference>
<dbReference type="GO" id="GO:0019856">
    <property type="term" value="P:pyrimidine nucleobase biosynthetic process"/>
    <property type="evidence" value="ECO:0007669"/>
    <property type="project" value="TreeGrafter"/>
</dbReference>
<dbReference type="CDD" id="cd06223">
    <property type="entry name" value="PRTases_typeI"/>
    <property type="match status" value="1"/>
</dbReference>
<dbReference type="Gene3D" id="3.40.50.2020">
    <property type="match status" value="1"/>
</dbReference>
<dbReference type="HAMAP" id="MF_01208">
    <property type="entry name" value="PyrE"/>
    <property type="match status" value="1"/>
</dbReference>
<dbReference type="InterPro" id="IPR023031">
    <property type="entry name" value="OPRT"/>
</dbReference>
<dbReference type="InterPro" id="IPR004467">
    <property type="entry name" value="Or_phspho_trans_dom"/>
</dbReference>
<dbReference type="InterPro" id="IPR000836">
    <property type="entry name" value="PRibTrfase_dom"/>
</dbReference>
<dbReference type="InterPro" id="IPR029057">
    <property type="entry name" value="PRTase-like"/>
</dbReference>
<dbReference type="NCBIfam" id="TIGR00336">
    <property type="entry name" value="pyrE"/>
    <property type="match status" value="1"/>
</dbReference>
<dbReference type="PANTHER" id="PTHR19278">
    <property type="entry name" value="OROTATE PHOSPHORIBOSYLTRANSFERASE"/>
    <property type="match status" value="1"/>
</dbReference>
<dbReference type="PANTHER" id="PTHR19278:SF9">
    <property type="entry name" value="URIDINE 5'-MONOPHOSPHATE SYNTHASE"/>
    <property type="match status" value="1"/>
</dbReference>
<dbReference type="Pfam" id="PF00156">
    <property type="entry name" value="Pribosyltran"/>
    <property type="match status" value="1"/>
</dbReference>
<dbReference type="SUPFAM" id="SSF53271">
    <property type="entry name" value="PRTase-like"/>
    <property type="match status" value="1"/>
</dbReference>
<gene>
    <name evidence="1" type="primary">pyrE</name>
    <name type="ordered locus">Ta0056</name>
</gene>
<name>PYRE_THEAC</name>
<evidence type="ECO:0000255" key="1">
    <source>
        <dbReference type="HAMAP-Rule" id="MF_01208"/>
    </source>
</evidence>
<sequence length="171" mass="18641">MGGLEEDLLRVGAIKFGDFVLTSGKRSTYYVDIKEAATDPSVLRKIASEFSGMIRSSKIAGMELGAVPLIVATALQMSIPYIIVRKERSHGTMSLLVGKFEKGEEIDVIEDVVTTGNSVLKAVNTLRENGAVVKRAYCVVDREEGGSDLLKENGIDLHPIIRISQVKGFRK</sequence>
<feature type="chain" id="PRO_0000110792" description="Orotate phosphoribosyltransferase">
    <location>
        <begin position="1"/>
        <end position="171"/>
    </location>
</feature>
<feature type="binding site" evidence="1">
    <location>
        <position position="85"/>
    </location>
    <ligand>
        <name>5-phospho-alpha-D-ribose 1-diphosphate</name>
        <dbReference type="ChEBI" id="CHEBI:58017"/>
        <note>ligand shared between dimeric partners</note>
    </ligand>
</feature>
<feature type="binding site" description="in other chain" evidence="1">
    <location>
        <position position="86"/>
    </location>
    <ligand>
        <name>5-phospho-alpha-D-ribose 1-diphosphate</name>
        <dbReference type="ChEBI" id="CHEBI:58017"/>
        <note>ligand shared between dimeric partners</note>
    </ligand>
</feature>
<feature type="binding site" evidence="1">
    <location>
        <position position="88"/>
    </location>
    <ligand>
        <name>5-phospho-alpha-D-ribose 1-diphosphate</name>
        <dbReference type="ChEBI" id="CHEBI:58017"/>
        <note>ligand shared between dimeric partners</note>
    </ligand>
</feature>
<feature type="binding site" evidence="1">
    <location>
        <position position="90"/>
    </location>
    <ligand>
        <name>5-phospho-alpha-D-ribose 1-diphosphate</name>
        <dbReference type="ChEBI" id="CHEBI:58017"/>
        <note>ligand shared between dimeric partners</note>
    </ligand>
</feature>
<feature type="binding site" description="in other chain" evidence="1">
    <location>
        <begin position="110"/>
        <end position="118"/>
    </location>
    <ligand>
        <name>5-phospho-alpha-D-ribose 1-diphosphate</name>
        <dbReference type="ChEBI" id="CHEBI:58017"/>
        <note>ligand shared between dimeric partners</note>
    </ligand>
</feature>
<feature type="binding site" evidence="1">
    <location>
        <position position="114"/>
    </location>
    <ligand>
        <name>orotate</name>
        <dbReference type="ChEBI" id="CHEBI:30839"/>
    </ligand>
</feature>
<feature type="binding site" evidence="1">
    <location>
        <position position="142"/>
    </location>
    <ligand>
        <name>orotate</name>
        <dbReference type="ChEBI" id="CHEBI:30839"/>
    </ligand>
</feature>
<reference key="1">
    <citation type="journal article" date="2000" name="Nature">
        <title>The genome sequence of the thermoacidophilic scavenger Thermoplasma acidophilum.</title>
        <authorList>
            <person name="Ruepp A."/>
            <person name="Graml W."/>
            <person name="Santos-Martinez M.-L."/>
            <person name="Koretke K.K."/>
            <person name="Volker C."/>
            <person name="Mewes H.-W."/>
            <person name="Frishman D."/>
            <person name="Stocker S."/>
            <person name="Lupas A.N."/>
            <person name="Baumeister W."/>
        </authorList>
    </citation>
    <scope>NUCLEOTIDE SEQUENCE [LARGE SCALE GENOMIC DNA]</scope>
    <source>
        <strain>ATCC 25905 / DSM 1728 / JCM 9062 / NBRC 15155 / AMRC-C165</strain>
    </source>
</reference>
<proteinExistence type="inferred from homology"/>
<protein>
    <recommendedName>
        <fullName evidence="1">Orotate phosphoribosyltransferase</fullName>
        <shortName evidence="1">OPRT</shortName>
        <shortName evidence="1">OPRTase</shortName>
        <ecNumber evidence="1">2.4.2.10</ecNumber>
    </recommendedName>
</protein>
<organism>
    <name type="scientific">Thermoplasma acidophilum (strain ATCC 25905 / DSM 1728 / JCM 9062 / NBRC 15155 / AMRC-C165)</name>
    <dbReference type="NCBI Taxonomy" id="273075"/>
    <lineage>
        <taxon>Archaea</taxon>
        <taxon>Methanobacteriati</taxon>
        <taxon>Thermoplasmatota</taxon>
        <taxon>Thermoplasmata</taxon>
        <taxon>Thermoplasmatales</taxon>
        <taxon>Thermoplasmataceae</taxon>
        <taxon>Thermoplasma</taxon>
    </lineage>
</organism>